<protein>
    <recommendedName>
        <fullName evidence="1">D-ribose pyranase</fullName>
        <ecNumber evidence="1">5.4.99.62</ecNumber>
    </recommendedName>
</protein>
<reference key="1">
    <citation type="journal article" date="2007" name="J. Bacteriol.">
        <title>The genome sequence of avian pathogenic Escherichia coli strain O1:K1:H7 shares strong similarities with human extraintestinal pathogenic E. coli genomes.</title>
        <authorList>
            <person name="Johnson T.J."/>
            <person name="Kariyawasam S."/>
            <person name="Wannemuehler Y."/>
            <person name="Mangiamele P."/>
            <person name="Johnson S.J."/>
            <person name="Doetkott C."/>
            <person name="Skyberg J.A."/>
            <person name="Lynne A.M."/>
            <person name="Johnson J.R."/>
            <person name="Nolan L.K."/>
        </authorList>
    </citation>
    <scope>NUCLEOTIDE SEQUENCE [LARGE SCALE GENOMIC DNA]</scope>
</reference>
<sequence>MKKGTVLNSDISSVISRLGHTDTLVVCDAGLPIPKSTTRIDMALTQGVPSFMQVLGVVTNEMQVEAVIIAEEIKQHNPQLHETLLTHLEQLQKHQGNTIEIRYTTHEQFKQQTAGSQAVIRSGECSPYANIILCAGVTF</sequence>
<gene>
    <name evidence="1" type="primary">rbsD</name>
    <name type="ordered locus">Ecok1_37240</name>
    <name type="ORF">APECO1_2715</name>
</gene>
<comment type="function">
    <text evidence="1">Catalyzes the interconversion of beta-pyran and beta-furan forms of D-ribose.</text>
</comment>
<comment type="catalytic activity">
    <reaction evidence="1">
        <text>beta-D-ribopyranose = beta-D-ribofuranose</text>
        <dbReference type="Rhea" id="RHEA:25432"/>
        <dbReference type="ChEBI" id="CHEBI:27476"/>
        <dbReference type="ChEBI" id="CHEBI:47002"/>
        <dbReference type="EC" id="5.4.99.62"/>
    </reaction>
</comment>
<comment type="pathway">
    <text evidence="1">Carbohydrate metabolism; D-ribose degradation; D-ribose 5-phosphate from beta-D-ribopyranose: step 1/2.</text>
</comment>
<comment type="subunit">
    <text evidence="1">Homodecamer.</text>
</comment>
<comment type="subcellular location">
    <subcellularLocation>
        <location evidence="1">Cytoplasm</location>
    </subcellularLocation>
</comment>
<comment type="similarity">
    <text evidence="1">Belongs to the RbsD / FucU family. RbsD subfamily.</text>
</comment>
<comment type="sequence caution" evidence="2">
    <conflict type="erroneous initiation">
        <sequence resource="EMBL-CDS" id="ABJ03218"/>
    </conflict>
</comment>
<organism>
    <name type="scientific">Escherichia coli O1:K1 / APEC</name>
    <dbReference type="NCBI Taxonomy" id="405955"/>
    <lineage>
        <taxon>Bacteria</taxon>
        <taxon>Pseudomonadati</taxon>
        <taxon>Pseudomonadota</taxon>
        <taxon>Gammaproteobacteria</taxon>
        <taxon>Enterobacterales</taxon>
        <taxon>Enterobacteriaceae</taxon>
        <taxon>Escherichia</taxon>
    </lineage>
</organism>
<evidence type="ECO:0000255" key="1">
    <source>
        <dbReference type="HAMAP-Rule" id="MF_01661"/>
    </source>
</evidence>
<evidence type="ECO:0000305" key="2"/>
<accession>A1AHS8</accession>
<feature type="chain" id="PRO_0000346201" description="D-ribose pyranase">
    <location>
        <begin position="1"/>
        <end position="139"/>
    </location>
</feature>
<feature type="active site" description="Proton donor" evidence="1">
    <location>
        <position position="20"/>
    </location>
</feature>
<feature type="binding site" evidence="1">
    <location>
        <position position="28"/>
    </location>
    <ligand>
        <name>substrate</name>
    </ligand>
</feature>
<feature type="binding site" evidence="1">
    <location>
        <position position="106"/>
    </location>
    <ligand>
        <name>substrate</name>
    </ligand>
</feature>
<feature type="binding site" evidence="1">
    <location>
        <begin position="128"/>
        <end position="130"/>
    </location>
    <ligand>
        <name>substrate</name>
    </ligand>
</feature>
<dbReference type="EC" id="5.4.99.62" evidence="1"/>
<dbReference type="EMBL" id="CP000468">
    <property type="protein sequence ID" value="ABJ03218.1"/>
    <property type="status" value="ALT_INIT"/>
    <property type="molecule type" value="Genomic_DNA"/>
</dbReference>
<dbReference type="RefSeq" id="WP_001350412.1">
    <property type="nucleotide sequence ID" value="NZ_CADILS010000011.1"/>
</dbReference>
<dbReference type="SMR" id="A1AHS8"/>
<dbReference type="KEGG" id="ecv:APECO1_2715"/>
<dbReference type="HOGENOM" id="CLU_135498_0_0_6"/>
<dbReference type="UniPathway" id="UPA00916">
    <property type="reaction ID" value="UER00888"/>
</dbReference>
<dbReference type="Proteomes" id="UP000008216">
    <property type="component" value="Chromosome"/>
</dbReference>
<dbReference type="GO" id="GO:0005829">
    <property type="term" value="C:cytosol"/>
    <property type="evidence" value="ECO:0007669"/>
    <property type="project" value="TreeGrafter"/>
</dbReference>
<dbReference type="GO" id="GO:0062193">
    <property type="term" value="F:D-ribose pyranase activity"/>
    <property type="evidence" value="ECO:0007669"/>
    <property type="project" value="UniProtKB-EC"/>
</dbReference>
<dbReference type="GO" id="GO:0016872">
    <property type="term" value="F:intramolecular lyase activity"/>
    <property type="evidence" value="ECO:0007669"/>
    <property type="project" value="UniProtKB-UniRule"/>
</dbReference>
<dbReference type="GO" id="GO:0048029">
    <property type="term" value="F:monosaccharide binding"/>
    <property type="evidence" value="ECO:0007669"/>
    <property type="project" value="InterPro"/>
</dbReference>
<dbReference type="GO" id="GO:0019303">
    <property type="term" value="P:D-ribose catabolic process"/>
    <property type="evidence" value="ECO:0007669"/>
    <property type="project" value="UniProtKB-UniRule"/>
</dbReference>
<dbReference type="FunFam" id="3.40.1650.10:FF:000002">
    <property type="entry name" value="D-ribose pyranase"/>
    <property type="match status" value="1"/>
</dbReference>
<dbReference type="Gene3D" id="3.40.1650.10">
    <property type="entry name" value="RbsD-like domain"/>
    <property type="match status" value="1"/>
</dbReference>
<dbReference type="HAMAP" id="MF_01661">
    <property type="entry name" value="D_rib_pyranase"/>
    <property type="match status" value="1"/>
</dbReference>
<dbReference type="InterPro" id="IPR023064">
    <property type="entry name" value="D-ribose_pyranase"/>
</dbReference>
<dbReference type="InterPro" id="IPR023750">
    <property type="entry name" value="RbsD-like_sf"/>
</dbReference>
<dbReference type="InterPro" id="IPR007721">
    <property type="entry name" value="RbsD_FucU"/>
</dbReference>
<dbReference type="NCBIfam" id="NF008761">
    <property type="entry name" value="PRK11797.1"/>
    <property type="match status" value="1"/>
</dbReference>
<dbReference type="PANTHER" id="PTHR37831">
    <property type="entry name" value="D-RIBOSE PYRANASE"/>
    <property type="match status" value="1"/>
</dbReference>
<dbReference type="PANTHER" id="PTHR37831:SF1">
    <property type="entry name" value="D-RIBOSE PYRANASE"/>
    <property type="match status" value="1"/>
</dbReference>
<dbReference type="Pfam" id="PF05025">
    <property type="entry name" value="RbsD_FucU"/>
    <property type="match status" value="1"/>
</dbReference>
<dbReference type="SUPFAM" id="SSF102546">
    <property type="entry name" value="RbsD-like"/>
    <property type="match status" value="1"/>
</dbReference>
<proteinExistence type="inferred from homology"/>
<keyword id="KW-0119">Carbohydrate metabolism</keyword>
<keyword id="KW-0963">Cytoplasm</keyword>
<keyword id="KW-0413">Isomerase</keyword>
<keyword id="KW-1185">Reference proteome</keyword>
<name>RBSD_ECOK1</name>